<name>CLPP_PSEFS</name>
<gene>
    <name evidence="1" type="primary">clpP</name>
    <name type="ordered locus">PFLU_3929</name>
</gene>
<comment type="function">
    <text evidence="1">Cleaves peptides in various proteins in a process that requires ATP hydrolysis. Has a chymotrypsin-like activity. Plays a major role in the degradation of misfolded proteins.</text>
</comment>
<comment type="catalytic activity">
    <reaction evidence="1">
        <text>Hydrolysis of proteins to small peptides in the presence of ATP and magnesium. alpha-casein is the usual test substrate. In the absence of ATP, only oligopeptides shorter than five residues are hydrolyzed (such as succinyl-Leu-Tyr-|-NHMec, and Leu-Tyr-Leu-|-Tyr-Trp, in which cleavage of the -Tyr-|-Leu- and -Tyr-|-Trp bonds also occurs).</text>
        <dbReference type="EC" id="3.4.21.92"/>
    </reaction>
</comment>
<comment type="subunit">
    <text evidence="1">Fourteen ClpP subunits assemble into 2 heptameric rings which stack back to back to give a disk-like structure with a central cavity, resembling the structure of eukaryotic proteasomes.</text>
</comment>
<comment type="subcellular location">
    <subcellularLocation>
        <location evidence="1">Cytoplasm</location>
    </subcellularLocation>
</comment>
<comment type="similarity">
    <text evidence="1">Belongs to the peptidase S14 family.</text>
</comment>
<organism>
    <name type="scientific">Pseudomonas fluorescens (strain SBW25)</name>
    <dbReference type="NCBI Taxonomy" id="216595"/>
    <lineage>
        <taxon>Bacteria</taxon>
        <taxon>Pseudomonadati</taxon>
        <taxon>Pseudomonadota</taxon>
        <taxon>Gammaproteobacteria</taxon>
        <taxon>Pseudomonadales</taxon>
        <taxon>Pseudomonadaceae</taxon>
        <taxon>Pseudomonas</taxon>
    </lineage>
</organism>
<dbReference type="EC" id="3.4.21.92" evidence="1"/>
<dbReference type="EMBL" id="AM181176">
    <property type="protein sequence ID" value="CAY50311.1"/>
    <property type="molecule type" value="Genomic_DNA"/>
</dbReference>
<dbReference type="RefSeq" id="WP_015884723.1">
    <property type="nucleotide sequence ID" value="NC_012660.1"/>
</dbReference>
<dbReference type="SMR" id="C3JYK0"/>
<dbReference type="STRING" id="294.SRM1_03536"/>
<dbReference type="MEROPS" id="S14.001"/>
<dbReference type="GeneID" id="93465277"/>
<dbReference type="eggNOG" id="COG0740">
    <property type="taxonomic scope" value="Bacteria"/>
</dbReference>
<dbReference type="HOGENOM" id="CLU_058707_3_3_6"/>
<dbReference type="OrthoDB" id="9802800at2"/>
<dbReference type="GO" id="GO:0005737">
    <property type="term" value="C:cytoplasm"/>
    <property type="evidence" value="ECO:0007669"/>
    <property type="project" value="UniProtKB-SubCell"/>
</dbReference>
<dbReference type="GO" id="GO:0009368">
    <property type="term" value="C:endopeptidase Clp complex"/>
    <property type="evidence" value="ECO:0007669"/>
    <property type="project" value="TreeGrafter"/>
</dbReference>
<dbReference type="GO" id="GO:0004176">
    <property type="term" value="F:ATP-dependent peptidase activity"/>
    <property type="evidence" value="ECO:0007669"/>
    <property type="project" value="InterPro"/>
</dbReference>
<dbReference type="GO" id="GO:0051117">
    <property type="term" value="F:ATPase binding"/>
    <property type="evidence" value="ECO:0007669"/>
    <property type="project" value="TreeGrafter"/>
</dbReference>
<dbReference type="GO" id="GO:0004252">
    <property type="term" value="F:serine-type endopeptidase activity"/>
    <property type="evidence" value="ECO:0007669"/>
    <property type="project" value="UniProtKB-UniRule"/>
</dbReference>
<dbReference type="GO" id="GO:0006515">
    <property type="term" value="P:protein quality control for misfolded or incompletely synthesized proteins"/>
    <property type="evidence" value="ECO:0007669"/>
    <property type="project" value="TreeGrafter"/>
</dbReference>
<dbReference type="CDD" id="cd07017">
    <property type="entry name" value="S14_ClpP_2"/>
    <property type="match status" value="1"/>
</dbReference>
<dbReference type="FunFam" id="3.90.226.10:FF:000001">
    <property type="entry name" value="ATP-dependent Clp protease proteolytic subunit"/>
    <property type="match status" value="1"/>
</dbReference>
<dbReference type="Gene3D" id="3.90.226.10">
    <property type="entry name" value="2-enoyl-CoA Hydratase, Chain A, domain 1"/>
    <property type="match status" value="1"/>
</dbReference>
<dbReference type="HAMAP" id="MF_00444">
    <property type="entry name" value="ClpP"/>
    <property type="match status" value="1"/>
</dbReference>
<dbReference type="InterPro" id="IPR001907">
    <property type="entry name" value="ClpP"/>
</dbReference>
<dbReference type="InterPro" id="IPR029045">
    <property type="entry name" value="ClpP/crotonase-like_dom_sf"/>
</dbReference>
<dbReference type="InterPro" id="IPR023562">
    <property type="entry name" value="ClpP/TepA"/>
</dbReference>
<dbReference type="InterPro" id="IPR033135">
    <property type="entry name" value="ClpP_His_AS"/>
</dbReference>
<dbReference type="InterPro" id="IPR018215">
    <property type="entry name" value="ClpP_Ser_AS"/>
</dbReference>
<dbReference type="NCBIfam" id="TIGR00493">
    <property type="entry name" value="clpP"/>
    <property type="match status" value="1"/>
</dbReference>
<dbReference type="NCBIfam" id="NF001368">
    <property type="entry name" value="PRK00277.1"/>
    <property type="match status" value="1"/>
</dbReference>
<dbReference type="NCBIfam" id="NF009205">
    <property type="entry name" value="PRK12553.1"/>
    <property type="match status" value="1"/>
</dbReference>
<dbReference type="PANTHER" id="PTHR10381">
    <property type="entry name" value="ATP-DEPENDENT CLP PROTEASE PROTEOLYTIC SUBUNIT"/>
    <property type="match status" value="1"/>
</dbReference>
<dbReference type="PANTHER" id="PTHR10381:SF70">
    <property type="entry name" value="ATP-DEPENDENT CLP PROTEASE PROTEOLYTIC SUBUNIT"/>
    <property type="match status" value="1"/>
</dbReference>
<dbReference type="Pfam" id="PF00574">
    <property type="entry name" value="CLP_protease"/>
    <property type="match status" value="1"/>
</dbReference>
<dbReference type="PRINTS" id="PR00127">
    <property type="entry name" value="CLPPROTEASEP"/>
</dbReference>
<dbReference type="SUPFAM" id="SSF52096">
    <property type="entry name" value="ClpP/crotonase"/>
    <property type="match status" value="1"/>
</dbReference>
<dbReference type="PROSITE" id="PS00382">
    <property type="entry name" value="CLP_PROTEASE_HIS"/>
    <property type="match status" value="1"/>
</dbReference>
<dbReference type="PROSITE" id="PS00381">
    <property type="entry name" value="CLP_PROTEASE_SER"/>
    <property type="match status" value="1"/>
</dbReference>
<keyword id="KW-0963">Cytoplasm</keyword>
<keyword id="KW-0378">Hydrolase</keyword>
<keyword id="KW-0645">Protease</keyword>
<keyword id="KW-0720">Serine protease</keyword>
<reference key="1">
    <citation type="journal article" date="2009" name="Genome Biol.">
        <title>Genomic and genetic analyses of diversity and plant interactions of Pseudomonas fluorescens.</title>
        <authorList>
            <person name="Silby M.W."/>
            <person name="Cerdeno-Tarraga A.M."/>
            <person name="Vernikos G.S."/>
            <person name="Giddens S.R."/>
            <person name="Jackson R.W."/>
            <person name="Preston G.M."/>
            <person name="Zhang X.-X."/>
            <person name="Moon C.D."/>
            <person name="Gehrig S.M."/>
            <person name="Godfrey S.A.C."/>
            <person name="Knight C.G."/>
            <person name="Malone J.G."/>
            <person name="Robinson Z."/>
            <person name="Spiers A.J."/>
            <person name="Harris S."/>
            <person name="Challis G.L."/>
            <person name="Yaxley A.M."/>
            <person name="Harris D."/>
            <person name="Seeger K."/>
            <person name="Murphy L."/>
            <person name="Rutter S."/>
            <person name="Squares R."/>
            <person name="Quail M.A."/>
            <person name="Saunders E."/>
            <person name="Mavromatis K."/>
            <person name="Brettin T.S."/>
            <person name="Bentley S.D."/>
            <person name="Hothersall J."/>
            <person name="Stephens E."/>
            <person name="Thomas C.M."/>
            <person name="Parkhill J."/>
            <person name="Levy S.B."/>
            <person name="Rainey P.B."/>
            <person name="Thomson N.R."/>
        </authorList>
    </citation>
    <scope>NUCLEOTIDE SEQUENCE [LARGE SCALE GENOMIC DNA]</scope>
    <source>
        <strain>SBW25</strain>
    </source>
</reference>
<accession>C3JYK0</accession>
<sequence length="211" mass="23420">MFRNSYIQQNSDIQAAGGLVPMVVEQSARGERAYDIYSRLLKERVIFLVGPVEDYMANLICAQLLFLEAENPDKDIHLYINSPGGSVTAGMSIYDTMQFIKPNVSTTCIGQACSMGAFLLTAGAEGKRFCLPNSRVMIHQPLGGFQGQASDIEIHAKEILFIRERLNTLMAKHSGHTLEEIERDTNRDNFMSAEAARDYGLIDAVIDKRPA</sequence>
<feature type="chain" id="PRO_1000206160" description="ATP-dependent Clp protease proteolytic subunit">
    <location>
        <begin position="1"/>
        <end position="211"/>
    </location>
</feature>
<feature type="active site" description="Nucleophile" evidence="1">
    <location>
        <position position="114"/>
    </location>
</feature>
<feature type="active site" evidence="1">
    <location>
        <position position="139"/>
    </location>
</feature>
<proteinExistence type="inferred from homology"/>
<protein>
    <recommendedName>
        <fullName evidence="1">ATP-dependent Clp protease proteolytic subunit</fullName>
        <ecNumber evidence="1">3.4.21.92</ecNumber>
    </recommendedName>
    <alternativeName>
        <fullName evidence="1">Endopeptidase Clp</fullName>
    </alternativeName>
</protein>
<evidence type="ECO:0000255" key="1">
    <source>
        <dbReference type="HAMAP-Rule" id="MF_00444"/>
    </source>
</evidence>